<protein>
    <recommendedName>
        <fullName evidence="1">Bifunctional glutamine synthetase adenylyltransferase/adenylyl-removing enzyme</fullName>
    </recommendedName>
    <alternativeName>
        <fullName evidence="1">ATP:glutamine synthetase adenylyltransferase</fullName>
    </alternativeName>
    <alternativeName>
        <fullName evidence="1">ATase</fullName>
    </alternativeName>
    <domain>
        <recommendedName>
            <fullName evidence="1">Glutamine synthetase adenylyl-L-tyrosine phosphorylase</fullName>
            <ecNumber evidence="1">2.7.7.89</ecNumber>
        </recommendedName>
        <alternativeName>
            <fullName evidence="1">Adenylyl removase</fullName>
            <shortName evidence="1">AR</shortName>
            <shortName evidence="1">AT-N</shortName>
        </alternativeName>
    </domain>
    <domain>
        <recommendedName>
            <fullName evidence="1">Glutamine synthetase adenylyl transferase</fullName>
            <ecNumber evidence="1">2.7.7.42</ecNumber>
        </recommendedName>
        <alternativeName>
            <fullName evidence="1">Adenylyl transferase</fullName>
            <shortName evidence="1">AT</shortName>
            <shortName evidence="1">AT-C</shortName>
        </alternativeName>
    </domain>
</protein>
<accession>Q73YJ1</accession>
<sequence length="998" mass="108601">MVVTKPATQRPRLPSVGRLGLVDPQAAERMAQLGWYDHDDQAHVDLLWALSRAPDPDAALLALVRLAETPDAGWDELGAALLTERPLRGRLFAVLGSSLALGDHLVAQPRSWKLLRGNVSLPTHDELCAMFTGCVDEALADPGSAMVRLRTLYRDRLLVLAALDLAATVEDEPVLPFTVVAAHLSDLADAALAAALRVAEHNVCGDRTPPRLAVIAMGKCGARELNYVSDVDVIFVGERADTVTTRVASEMMRLASEAFFQVDAGLRPEGRSGELVRTVESHIAYYQRWAKTWEFQALLKARAAVGDAELGRRYLDALMPMVWVACEREDFVVEVQAMRRRVEQLVPADVRGREIKLGSGGLRDVEFAVQLLQLVHGRSDESLHVASTVDALAALGQGGYIGREDAANLTASYEFLRLLEHRLQLQRLKRTHLLPEADDEEAVRWLARAAHIRPDGRHDAAGVLREELRHQNLRVSQLHAKLFYQPLLESIGPAGLEIRHGMTSEAAERQLAALGYEGPQSALKHMSALVNQSGRRGRVQSVLLPRLLNWMSYAPDPDGGLLAYRRLSEALAGESWYLSTLRDKPAVARRLMHVLGTSAYVPDLLMRAPRVIQDYGDGPSGPRLLETDPAAVARALVASASRYSDPVRAIAGARTLRRRELARVASADLLGMLEVTDVCKALTSVWVAVLQAALDAMIRANLPDDGPQRGKAPAAIAVIGMGRLGGAELGYGSDADVMFVCEPAPGVDDSAAVRWAASVAEQVRTLLGTPSVDPPLDVDANLRPEGRNGPLVRTLASYAACYEQWAQPWEIQALLRAHAVAGDAELGHRFLLMADKTRYPADGVSPEAVREIRRIKARVDAERLPRGADPNTHTKLGRGGLADIEWTVQLLQLLHAHEVPALHNTSTLECLDAIAEAGLVPADEVDLLRQAWLTATRARNALVLVRGKPTDQLPGPGRQLNAVAVAAGWPTDEGGEFLDNYLRVTRRAKAVVCKVFGS</sequence>
<organism>
    <name type="scientific">Mycolicibacterium paratuberculosis (strain ATCC BAA-968 / K-10)</name>
    <name type="common">Mycobacterium paratuberculosis</name>
    <dbReference type="NCBI Taxonomy" id="262316"/>
    <lineage>
        <taxon>Bacteria</taxon>
        <taxon>Bacillati</taxon>
        <taxon>Actinomycetota</taxon>
        <taxon>Actinomycetes</taxon>
        <taxon>Mycobacteriales</taxon>
        <taxon>Mycobacteriaceae</taxon>
        <taxon>Mycobacterium</taxon>
        <taxon>Mycobacterium avium complex (MAC)</taxon>
    </lineage>
</organism>
<keyword id="KW-0067">ATP-binding</keyword>
<keyword id="KW-0460">Magnesium</keyword>
<keyword id="KW-0511">Multifunctional enzyme</keyword>
<keyword id="KW-0547">Nucleotide-binding</keyword>
<keyword id="KW-0548">Nucleotidyltransferase</keyword>
<keyword id="KW-1185">Reference proteome</keyword>
<keyword id="KW-0808">Transferase</keyword>
<name>GLNE_MYCPA</name>
<feature type="chain" id="PRO_0000209256" description="Bifunctional glutamine synthetase adenylyltransferase/adenylyl-removing enzyme">
    <location>
        <begin position="1"/>
        <end position="998"/>
    </location>
</feature>
<feature type="region of interest" description="Adenylyl removase" evidence="1">
    <location>
        <begin position="1"/>
        <end position="487"/>
    </location>
</feature>
<feature type="region of interest" description="Adenylyl transferase" evidence="1">
    <location>
        <begin position="492"/>
        <end position="998"/>
    </location>
</feature>
<evidence type="ECO:0000255" key="1">
    <source>
        <dbReference type="HAMAP-Rule" id="MF_00802"/>
    </source>
</evidence>
<proteinExistence type="inferred from homology"/>
<comment type="function">
    <text evidence="1">Involved in the regulation of glutamine synthetase GlnA, a key enzyme in the process to assimilate ammonia. When cellular nitrogen levels are high, the C-terminal adenylyl transferase (AT) inactivates GlnA by covalent transfer of an adenylyl group from ATP to specific tyrosine residue of GlnA, thus reducing its activity. Conversely, when nitrogen levels are low, the N-terminal adenylyl removase (AR) activates GlnA by removing the adenylyl group by phosphorolysis, increasing its activity. The regulatory region of GlnE binds the signal transduction protein PII (GlnB) which indicates the nitrogen status of the cell.</text>
</comment>
<comment type="catalytic activity">
    <reaction evidence="1">
        <text>[glutamine synthetase]-O(4)-(5'-adenylyl)-L-tyrosine + phosphate = [glutamine synthetase]-L-tyrosine + ADP</text>
        <dbReference type="Rhea" id="RHEA:43716"/>
        <dbReference type="Rhea" id="RHEA-COMP:10660"/>
        <dbReference type="Rhea" id="RHEA-COMP:10661"/>
        <dbReference type="ChEBI" id="CHEBI:43474"/>
        <dbReference type="ChEBI" id="CHEBI:46858"/>
        <dbReference type="ChEBI" id="CHEBI:83624"/>
        <dbReference type="ChEBI" id="CHEBI:456216"/>
        <dbReference type="EC" id="2.7.7.89"/>
    </reaction>
</comment>
<comment type="catalytic activity">
    <reaction evidence="1">
        <text>[glutamine synthetase]-L-tyrosine + ATP = [glutamine synthetase]-O(4)-(5'-adenylyl)-L-tyrosine + diphosphate</text>
        <dbReference type="Rhea" id="RHEA:18589"/>
        <dbReference type="Rhea" id="RHEA-COMP:10660"/>
        <dbReference type="Rhea" id="RHEA-COMP:10661"/>
        <dbReference type="ChEBI" id="CHEBI:30616"/>
        <dbReference type="ChEBI" id="CHEBI:33019"/>
        <dbReference type="ChEBI" id="CHEBI:46858"/>
        <dbReference type="ChEBI" id="CHEBI:83624"/>
        <dbReference type="EC" id="2.7.7.42"/>
    </reaction>
</comment>
<comment type="cofactor">
    <cofactor evidence="1">
        <name>Mg(2+)</name>
        <dbReference type="ChEBI" id="CHEBI:18420"/>
    </cofactor>
</comment>
<comment type="similarity">
    <text evidence="1">Belongs to the GlnE family.</text>
</comment>
<reference key="1">
    <citation type="journal article" date="2005" name="Proc. Natl. Acad. Sci. U.S.A.">
        <title>The complete genome sequence of Mycobacterium avium subspecies paratuberculosis.</title>
        <authorList>
            <person name="Li L."/>
            <person name="Bannantine J.P."/>
            <person name="Zhang Q."/>
            <person name="Amonsin A."/>
            <person name="May B.J."/>
            <person name="Alt D."/>
            <person name="Banerji N."/>
            <person name="Kanjilal S."/>
            <person name="Kapur V."/>
        </authorList>
    </citation>
    <scope>NUCLEOTIDE SEQUENCE [LARGE SCALE GENOMIC DNA]</scope>
    <source>
        <strain>ATCC BAA-968 / K-10</strain>
    </source>
</reference>
<gene>
    <name evidence="1" type="primary">glnE</name>
    <name type="ordered locus">MAP_1965c</name>
</gene>
<dbReference type="EC" id="2.7.7.89" evidence="1"/>
<dbReference type="EC" id="2.7.7.42" evidence="1"/>
<dbReference type="EMBL" id="AE016958">
    <property type="protein sequence ID" value="AAS04282.1"/>
    <property type="molecule type" value="Genomic_DNA"/>
</dbReference>
<dbReference type="RefSeq" id="WP_010949429.1">
    <property type="nucleotide sequence ID" value="NZ_CP106873.1"/>
</dbReference>
<dbReference type="SMR" id="Q73YJ1"/>
<dbReference type="STRING" id="262316.MAP_1965c"/>
<dbReference type="KEGG" id="mpa:MAP_1965c"/>
<dbReference type="PATRIC" id="fig|262316.17.peg.2085"/>
<dbReference type="eggNOG" id="COG1391">
    <property type="taxonomic scope" value="Bacteria"/>
</dbReference>
<dbReference type="HOGENOM" id="CLU_006233_1_0_11"/>
<dbReference type="Proteomes" id="UP000000580">
    <property type="component" value="Chromosome"/>
</dbReference>
<dbReference type="GO" id="GO:0005829">
    <property type="term" value="C:cytosol"/>
    <property type="evidence" value="ECO:0007669"/>
    <property type="project" value="TreeGrafter"/>
</dbReference>
<dbReference type="GO" id="GO:0008882">
    <property type="term" value="F:[glutamate-ammonia-ligase] adenylyltransferase activity"/>
    <property type="evidence" value="ECO:0007669"/>
    <property type="project" value="UniProtKB-UniRule"/>
</dbReference>
<dbReference type="GO" id="GO:0047388">
    <property type="term" value="F:[glutamine synthetase]-adenylyl-L-tyrosine phosphorylase activity"/>
    <property type="evidence" value="ECO:0007669"/>
    <property type="project" value="UniProtKB-EC"/>
</dbReference>
<dbReference type="GO" id="GO:0005524">
    <property type="term" value="F:ATP binding"/>
    <property type="evidence" value="ECO:0007669"/>
    <property type="project" value="UniProtKB-UniRule"/>
</dbReference>
<dbReference type="GO" id="GO:0000287">
    <property type="term" value="F:magnesium ion binding"/>
    <property type="evidence" value="ECO:0007669"/>
    <property type="project" value="UniProtKB-UniRule"/>
</dbReference>
<dbReference type="GO" id="GO:0000820">
    <property type="term" value="P:regulation of glutamine family amino acid metabolic process"/>
    <property type="evidence" value="ECO:0007669"/>
    <property type="project" value="UniProtKB-UniRule"/>
</dbReference>
<dbReference type="CDD" id="cd05401">
    <property type="entry name" value="NT_GlnE_GlnD_like"/>
    <property type="match status" value="2"/>
</dbReference>
<dbReference type="FunFam" id="1.20.120.330:FF:000022">
    <property type="entry name" value="Bifunctional glutamine synthetase adenylyltransferase/adenylyl-removing enzyme"/>
    <property type="match status" value="1"/>
</dbReference>
<dbReference type="Gene3D" id="3.30.460.10">
    <property type="entry name" value="Beta Polymerase, domain 2"/>
    <property type="match status" value="2"/>
</dbReference>
<dbReference type="Gene3D" id="1.20.120.330">
    <property type="entry name" value="Nucleotidyltransferases domain 2"/>
    <property type="match status" value="2"/>
</dbReference>
<dbReference type="HAMAP" id="MF_00802">
    <property type="entry name" value="GlnE"/>
    <property type="match status" value="1"/>
</dbReference>
<dbReference type="InterPro" id="IPR023057">
    <property type="entry name" value="GlnE"/>
</dbReference>
<dbReference type="InterPro" id="IPR005190">
    <property type="entry name" value="GlnE_rpt_dom"/>
</dbReference>
<dbReference type="InterPro" id="IPR043519">
    <property type="entry name" value="NT_sf"/>
</dbReference>
<dbReference type="InterPro" id="IPR013546">
    <property type="entry name" value="PII_UdlTrfase/GS_AdlTrfase"/>
</dbReference>
<dbReference type="NCBIfam" id="NF010707">
    <property type="entry name" value="PRK14109.1"/>
    <property type="match status" value="1"/>
</dbReference>
<dbReference type="PANTHER" id="PTHR30621:SF0">
    <property type="entry name" value="BIFUNCTIONAL GLUTAMINE SYNTHETASE ADENYLYLTRANSFERASE_ADENYLYL-REMOVING ENZYME"/>
    <property type="match status" value="1"/>
</dbReference>
<dbReference type="PANTHER" id="PTHR30621">
    <property type="entry name" value="GLUTAMINE SYNTHETASE ADENYLYLTRANSFERASE"/>
    <property type="match status" value="1"/>
</dbReference>
<dbReference type="Pfam" id="PF08335">
    <property type="entry name" value="GlnD_UR_UTase"/>
    <property type="match status" value="2"/>
</dbReference>
<dbReference type="Pfam" id="PF03710">
    <property type="entry name" value="GlnE"/>
    <property type="match status" value="2"/>
</dbReference>
<dbReference type="SUPFAM" id="SSF81301">
    <property type="entry name" value="Nucleotidyltransferase"/>
    <property type="match status" value="2"/>
</dbReference>
<dbReference type="SUPFAM" id="SSF81593">
    <property type="entry name" value="Nucleotidyltransferase substrate binding subunit/domain"/>
    <property type="match status" value="2"/>
</dbReference>